<protein>
    <recommendedName>
        <fullName>23 kDa piroplasm membrane protein</fullName>
    </recommendedName>
    <alternativeName>
        <fullName>p23</fullName>
    </alternativeName>
</protein>
<proteinExistence type="inferred from homology"/>
<dbReference type="EMBL" id="AB021223">
    <property type="protein sequence ID" value="BAA78419.1"/>
    <property type="molecule type" value="Genomic_DNA"/>
</dbReference>
<dbReference type="SMR" id="Q9XXX1"/>
<dbReference type="GO" id="GO:0016020">
    <property type="term" value="C:membrane"/>
    <property type="evidence" value="ECO:0007669"/>
    <property type="project" value="UniProtKB-SubCell"/>
</dbReference>
<organism>
    <name type="scientific">Theileria buffeli</name>
    <dbReference type="NCBI Taxonomy" id="5876"/>
    <lineage>
        <taxon>Eukaryota</taxon>
        <taxon>Sar</taxon>
        <taxon>Alveolata</taxon>
        <taxon>Apicomplexa</taxon>
        <taxon>Aconoidasida</taxon>
        <taxon>Piroplasmida</taxon>
        <taxon>Theileriidae</taxon>
        <taxon>Theileria</taxon>
    </lineage>
</organism>
<feature type="signal peptide" evidence="1">
    <location>
        <begin position="1"/>
        <end position="19"/>
    </location>
</feature>
<feature type="chain" id="PRO_0000232716" description="23 kDa piroplasm membrane protein">
    <location>
        <begin position="20"/>
        <end position="223"/>
    </location>
</feature>
<feature type="topological domain" description="Extracellular" evidence="1">
    <location>
        <begin position="20"/>
        <end position="197"/>
    </location>
</feature>
<feature type="transmembrane region" description="Helical" evidence="1">
    <location>
        <begin position="198"/>
        <end position="218"/>
    </location>
</feature>
<feature type="topological domain" description="Cytoplasmic" evidence="1">
    <location>
        <begin position="219"/>
        <end position="223"/>
    </location>
</feature>
<feature type="glycosylation site" description="N-linked (GlcNAc...) asparagine" evidence="1">
    <location>
        <position position="69"/>
    </location>
</feature>
<sequence length="223" mass="25938">MHKFTKVFFVAILVHTLKSGLVFTPVSGTAIDIDKDGKFADRITINHFQSDMEGYKAYTYQKEGDKYVNISKVFYGERLLKVGGYNMKCDYVFYIKVFWKGELAPFLIKLKYYSWSWAPYKKHFKLNPQLEWEEVFIPTIDETSETGYRRLFKQRMDNPFSLIGDDLLASYKPFKATKAEQVIAGTTEEEKSDKKKYVLMVVVVVVFVVVASLVVFLVKFCLK</sequence>
<accession>Q9XXX1</accession>
<name>P23_THEBU</name>
<keyword id="KW-0325">Glycoprotein</keyword>
<keyword id="KW-0472">Membrane</keyword>
<keyword id="KW-0732">Signal</keyword>
<keyword id="KW-0812">Transmembrane</keyword>
<keyword id="KW-1133">Transmembrane helix</keyword>
<comment type="subcellular location">
    <subcellularLocation>
        <location evidence="2">Membrane</location>
        <topology evidence="2">Single-pass membrane protein</topology>
    </subcellularLocation>
</comment>
<reference key="1">
    <citation type="journal article" date="1999" name="Int. J. Parasitol.">
        <title>Molecular cloning and characterisation of 23-kDa piroplasm surface proteins of Theileria sergenti and Theileria buffeli.</title>
        <authorList>
            <person name="Sako Y."/>
            <person name="Asada M."/>
            <person name="Kubota S."/>
            <person name="Sugimoto C."/>
            <person name="Onuma M."/>
        </authorList>
    </citation>
    <scope>NUCLEOTIDE SEQUENCE [GENOMIC DNA]</scope>
</reference>
<evidence type="ECO:0000255" key="1"/>
<evidence type="ECO:0000305" key="2"/>